<evidence type="ECO:0000255" key="1">
    <source>
        <dbReference type="HAMAP-Rule" id="MF_00465"/>
    </source>
</evidence>
<protein>
    <recommendedName>
        <fullName evidence="1">S-adenosylmethionine decarboxylase proenzyme</fullName>
        <shortName evidence="1">AdoMetDC</shortName>
        <shortName evidence="1">SAMDC</shortName>
        <ecNumber evidence="1">4.1.1.50</ecNumber>
    </recommendedName>
    <component>
        <recommendedName>
            <fullName evidence="1">S-adenosylmethionine decarboxylase beta chain</fullName>
        </recommendedName>
    </component>
    <component>
        <recommendedName>
            <fullName evidence="1">S-adenosylmethionine decarboxylase alpha chain</fullName>
        </recommendedName>
    </component>
</protein>
<reference key="1">
    <citation type="journal article" date="2005" name="Nucleic Acids Res.">
        <title>Genome dynamics and diversity of Shigella species, the etiologic agents of bacillary dysentery.</title>
        <authorList>
            <person name="Yang F."/>
            <person name="Yang J."/>
            <person name="Zhang X."/>
            <person name="Chen L."/>
            <person name="Jiang Y."/>
            <person name="Yan Y."/>
            <person name="Tang X."/>
            <person name="Wang J."/>
            <person name="Xiong Z."/>
            <person name="Dong J."/>
            <person name="Xue Y."/>
            <person name="Zhu Y."/>
            <person name="Xu X."/>
            <person name="Sun L."/>
            <person name="Chen S."/>
            <person name="Nie H."/>
            <person name="Peng J."/>
            <person name="Xu J."/>
            <person name="Wang Y."/>
            <person name="Yuan Z."/>
            <person name="Wen Y."/>
            <person name="Yao Z."/>
            <person name="Shen Y."/>
            <person name="Qiang B."/>
            <person name="Hou Y."/>
            <person name="Yu J."/>
            <person name="Jin Q."/>
        </authorList>
    </citation>
    <scope>NUCLEOTIDE SEQUENCE [LARGE SCALE GENOMIC DNA]</scope>
    <source>
        <strain>Sd197</strain>
    </source>
</reference>
<organism>
    <name type="scientific">Shigella dysenteriae serotype 1 (strain Sd197)</name>
    <dbReference type="NCBI Taxonomy" id="300267"/>
    <lineage>
        <taxon>Bacteria</taxon>
        <taxon>Pseudomonadati</taxon>
        <taxon>Pseudomonadota</taxon>
        <taxon>Gammaproteobacteria</taxon>
        <taxon>Enterobacterales</taxon>
        <taxon>Enterobacteriaceae</taxon>
        <taxon>Shigella</taxon>
    </lineage>
</organism>
<accession>Q32K91</accession>
<proteinExistence type="inferred from homology"/>
<feature type="chain" id="PRO_0000273611" description="S-adenosylmethionine decarboxylase beta chain" evidence="1">
    <location>
        <begin position="1"/>
        <end position="111"/>
    </location>
</feature>
<feature type="chain" id="PRO_0000273612" description="S-adenosylmethionine decarboxylase alpha chain" evidence="1">
    <location>
        <begin position="112"/>
        <end position="264"/>
    </location>
</feature>
<feature type="active site" description="Schiff-base intermediate with substrate; via pyruvic acid" evidence="1">
    <location>
        <position position="112"/>
    </location>
</feature>
<feature type="active site" description="Proton acceptor; for processing activity" evidence="1">
    <location>
        <position position="117"/>
    </location>
</feature>
<feature type="active site" description="Proton donor; for catalytic activity" evidence="1">
    <location>
        <position position="140"/>
    </location>
</feature>
<feature type="site" description="Cleavage (non-hydrolytic); by autolysis" evidence="1">
    <location>
        <begin position="111"/>
        <end position="112"/>
    </location>
</feature>
<feature type="modified residue" description="Pyruvic acid (Ser); by autocatalysis" evidence="1">
    <location>
        <position position="112"/>
    </location>
</feature>
<keyword id="KW-0068">Autocatalytic cleavage</keyword>
<keyword id="KW-0210">Decarboxylase</keyword>
<keyword id="KW-0456">Lyase</keyword>
<keyword id="KW-0620">Polyamine biosynthesis</keyword>
<keyword id="KW-0670">Pyruvate</keyword>
<keyword id="KW-1185">Reference proteome</keyword>
<keyword id="KW-0949">S-adenosyl-L-methionine</keyword>
<keyword id="KW-0704">Schiff base</keyword>
<keyword id="KW-0745">Spermidine biosynthesis</keyword>
<keyword id="KW-0865">Zymogen</keyword>
<dbReference type="EC" id="4.1.1.50" evidence="1"/>
<dbReference type="EMBL" id="CP000034">
    <property type="protein sequence ID" value="ABB60267.1"/>
    <property type="molecule type" value="Genomic_DNA"/>
</dbReference>
<dbReference type="RefSeq" id="WP_000734289.1">
    <property type="nucleotide sequence ID" value="NC_007606.1"/>
</dbReference>
<dbReference type="RefSeq" id="YP_401755.1">
    <property type="nucleotide sequence ID" value="NC_007606.1"/>
</dbReference>
<dbReference type="SMR" id="Q32K91"/>
<dbReference type="STRING" id="300267.SDY_0027"/>
<dbReference type="EnsemblBacteria" id="ABB60267">
    <property type="protein sequence ID" value="ABB60267"/>
    <property type="gene ID" value="SDY_0027"/>
</dbReference>
<dbReference type="KEGG" id="sdy:SDY_0027"/>
<dbReference type="PATRIC" id="fig|300267.13.peg.29"/>
<dbReference type="HOGENOM" id="CLU_092007_0_0_6"/>
<dbReference type="UniPathway" id="UPA00331">
    <property type="reaction ID" value="UER00451"/>
</dbReference>
<dbReference type="Proteomes" id="UP000002716">
    <property type="component" value="Chromosome"/>
</dbReference>
<dbReference type="GO" id="GO:0005829">
    <property type="term" value="C:cytosol"/>
    <property type="evidence" value="ECO:0007669"/>
    <property type="project" value="TreeGrafter"/>
</dbReference>
<dbReference type="GO" id="GO:0004014">
    <property type="term" value="F:adenosylmethionine decarboxylase activity"/>
    <property type="evidence" value="ECO:0007669"/>
    <property type="project" value="UniProtKB-UniRule"/>
</dbReference>
<dbReference type="GO" id="GO:0008295">
    <property type="term" value="P:spermidine biosynthetic process"/>
    <property type="evidence" value="ECO:0007669"/>
    <property type="project" value="UniProtKB-UniRule"/>
</dbReference>
<dbReference type="FunFam" id="3.60.90.10:FF:000001">
    <property type="entry name" value="S-adenosylmethionine decarboxylase proenzyme"/>
    <property type="match status" value="1"/>
</dbReference>
<dbReference type="Gene3D" id="3.60.90.10">
    <property type="entry name" value="S-adenosylmethionine decarboxylase"/>
    <property type="match status" value="1"/>
</dbReference>
<dbReference type="HAMAP" id="MF_00465">
    <property type="entry name" value="AdoMetDC_2"/>
    <property type="match status" value="1"/>
</dbReference>
<dbReference type="InterPro" id="IPR003826">
    <property type="entry name" value="AdoMetDC_fam_prok"/>
</dbReference>
<dbReference type="InterPro" id="IPR009165">
    <property type="entry name" value="S-AdoMet_deCO2ase_bac"/>
</dbReference>
<dbReference type="InterPro" id="IPR016067">
    <property type="entry name" value="S-AdoMet_deCO2ase_core"/>
</dbReference>
<dbReference type="NCBIfam" id="TIGR03331">
    <property type="entry name" value="SAM_DCase_Eco"/>
    <property type="match status" value="1"/>
</dbReference>
<dbReference type="PANTHER" id="PTHR33866">
    <property type="entry name" value="S-ADENOSYLMETHIONINE DECARBOXYLASE PROENZYME"/>
    <property type="match status" value="1"/>
</dbReference>
<dbReference type="PANTHER" id="PTHR33866:SF1">
    <property type="entry name" value="S-ADENOSYLMETHIONINE DECARBOXYLASE PROENZYME"/>
    <property type="match status" value="1"/>
</dbReference>
<dbReference type="Pfam" id="PF02675">
    <property type="entry name" value="AdoMet_dc"/>
    <property type="match status" value="1"/>
</dbReference>
<dbReference type="PIRSF" id="PIRSF001356">
    <property type="entry name" value="SAM_decarboxylas"/>
    <property type="match status" value="1"/>
</dbReference>
<dbReference type="SUPFAM" id="SSF56276">
    <property type="entry name" value="S-adenosylmethionine decarboxylase"/>
    <property type="match status" value="1"/>
</dbReference>
<name>SPED_SHIDS</name>
<gene>
    <name evidence="1" type="primary">speD</name>
    <name type="ordered locus">SDY_0027</name>
</gene>
<sequence>MKKLKLHGFNNLTKSLSFCIYDICYAKTAEERDGYIAYIDELYNANRLTEILSETCSIIGANILNIARQDYEPQGASVTILVSEEPVDPKLIDKTEHPGPLPETVVAHLDKSHICVHTYPESHPEGGLCTFRADIEVSTCGVISPLKALNYLIHQLESDIVTIDYRVRGFTRDINGMKHFIDHEINSIQNFMSDGMKALYDMVDVNVYQENIFHTKMLLKEFDLKHYMFHTKPEDLTDSERQEITAALWKEMREIYYGRNMPAV</sequence>
<comment type="function">
    <text evidence="1">Catalyzes the decarboxylation of S-adenosylmethionine to S-adenosylmethioninamine (dcAdoMet), the propylamine donor required for the synthesis of the polyamines spermine and spermidine from the diamine putrescine.</text>
</comment>
<comment type="catalytic activity">
    <reaction evidence="1">
        <text>S-adenosyl-L-methionine + H(+) = S-adenosyl 3-(methylsulfanyl)propylamine + CO2</text>
        <dbReference type="Rhea" id="RHEA:15981"/>
        <dbReference type="ChEBI" id="CHEBI:15378"/>
        <dbReference type="ChEBI" id="CHEBI:16526"/>
        <dbReference type="ChEBI" id="CHEBI:57443"/>
        <dbReference type="ChEBI" id="CHEBI:59789"/>
        <dbReference type="EC" id="4.1.1.50"/>
    </reaction>
</comment>
<comment type="cofactor">
    <cofactor evidence="1">
        <name>pyruvate</name>
        <dbReference type="ChEBI" id="CHEBI:15361"/>
    </cofactor>
    <text evidence="1">Binds 1 pyruvoyl group covalently per subunit.</text>
</comment>
<comment type="pathway">
    <text evidence="1">Amine and polyamine biosynthesis; S-adenosylmethioninamine biosynthesis; S-adenosylmethioninamine from S-adenosyl-L-methionine: step 1/1.</text>
</comment>
<comment type="subunit">
    <text evidence="1">Heterooctamer of four alpha and four beta chains arranged as a tetramer of alpha/beta heterodimers.</text>
</comment>
<comment type="PTM">
    <text evidence="1">Is synthesized initially as an inactive proenzyme. Formation of the active enzyme involves a self-maturation process in which the active site pyruvoyl group is generated from an internal serine residue via an autocatalytic post-translational modification. Two non-identical subunits are generated from the proenzyme in this reaction, and the pyruvate is formed at the N-terminus of the alpha chain, which is derived from the carboxyl end of the proenzyme. The post-translation cleavage follows an unusual pathway, termed non-hydrolytic serinolysis, in which the side chain hydroxyl group of the serine supplies its oxygen atom to form the C-terminus of the beta chain, while the remainder of the serine residue undergoes an oxidative deamination to produce ammonia and the pyruvoyl group blocking the N-terminus of the alpha chain.</text>
</comment>
<comment type="similarity">
    <text evidence="1">Belongs to the prokaryotic AdoMetDC family. Type 2 subfamily.</text>
</comment>